<comment type="function">
    <text evidence="1">High-conductance magnesium-selective channel that mediates the influx of magnesium into the mitochondrial matrix. Essential for the splicing of mRNA group II introns in mitochondria by affecting mitochondrial magnesium concentrations, which are critical for group II intron splicing. It also suppresses a variety of mitochondrial intron mutations and its absence may disturb the assembly of mitochondrial membrane complexes.</text>
</comment>
<comment type="subunit">
    <text evidence="1">Homopentamer. Forms homooligomers. Interacts with MFM1.</text>
</comment>
<comment type="subcellular location">
    <subcellularLocation>
        <location evidence="1">Mitochondrion inner membrane</location>
        <topology evidence="1">Multi-pass membrane protein</topology>
    </subcellularLocation>
</comment>
<comment type="similarity">
    <text evidence="3">Belongs to the CorA metal ion transporter (MIT) (TC 1.A.35) family.</text>
</comment>
<sequence>MYHIHRLLAPIRSNSVFFSLAQLPKPSLIGCRYKSNNVGSQDSKRTSKNSILHNLGSYSNSAESEILNKLKPITPNDLYVSCTSFDRIGNITAVSRKYPKMQFLKENHLFPRDLRKIDTSSIDVVPVIMIRPSSAILVNLLHIKAIIKKDNVMVFDTSKSEVATKLGIFMYDLELKLKSPANNVCYEFRALESILVSVTSYLEAEIKLHRQQCGIILAELEDEVDRAKLQELLIRSKKLSSFHQRAILIRDVLEELLENDEDLAGMYLTDLKRFEPEEENYEEIESILESYYNQCDEYVQQAGSLLSDIKATEEIVNIILDANRNSLMLFELKITVYTLGFTVATLVPAFYGMNLKNYIEETNWGFGLVLVVSLLQGLAITWLNFRKLHKVQKLTMMGTSNSSKAGTGLSRHIPPTSRVDRWKRGSFLYRLFYGSGGKYSKPSKKFDRPTNREKDAMWRMINDDKAMK</sequence>
<protein>
    <recommendedName>
        <fullName>Mitochondrial inner membrane magnesium transporter MRS2</fullName>
    </recommendedName>
    <alternativeName>
        <fullName>RNA-splicing protein MRS2</fullName>
    </alternativeName>
</protein>
<dbReference type="EMBL" id="CP017630">
    <property type="protein sequence ID" value="AOW30948.1"/>
    <property type="molecule type" value="Genomic_DNA"/>
</dbReference>
<dbReference type="RefSeq" id="XP_718262.1">
    <property type="nucleotide sequence ID" value="XM_713169.2"/>
</dbReference>
<dbReference type="SMR" id="Q5A970"/>
<dbReference type="FunCoup" id="Q5A970">
    <property type="interactions" value="368"/>
</dbReference>
<dbReference type="STRING" id="237561.Q5A970"/>
<dbReference type="EnsemblFungi" id="CR_01960C_A-T">
    <property type="protein sequence ID" value="CR_01960C_A-T-p1"/>
    <property type="gene ID" value="CR_01960C_A"/>
</dbReference>
<dbReference type="GeneID" id="3640110"/>
<dbReference type="KEGG" id="cal:CAALFM_CR01960CA"/>
<dbReference type="CGD" id="CAL0000174046">
    <property type="gene designation" value="MRS2"/>
</dbReference>
<dbReference type="VEuPathDB" id="FungiDB:CR_01960C_A"/>
<dbReference type="eggNOG" id="KOG2662">
    <property type="taxonomic scope" value="Eukaryota"/>
</dbReference>
<dbReference type="HOGENOM" id="CLU_025144_1_0_1"/>
<dbReference type="InParanoid" id="Q5A970"/>
<dbReference type="OMA" id="TLLIHMF"/>
<dbReference type="OrthoDB" id="10251508at2759"/>
<dbReference type="PRO" id="PR:Q5A970"/>
<dbReference type="Proteomes" id="UP000000559">
    <property type="component" value="Chromosome R"/>
</dbReference>
<dbReference type="GO" id="GO:0005743">
    <property type="term" value="C:mitochondrial inner membrane"/>
    <property type="evidence" value="ECO:0000250"/>
    <property type="project" value="UniProtKB"/>
</dbReference>
<dbReference type="GO" id="GO:1901612">
    <property type="term" value="F:cardiolipin binding"/>
    <property type="evidence" value="ECO:0007669"/>
    <property type="project" value="EnsemblFungi"/>
</dbReference>
<dbReference type="GO" id="GO:0015095">
    <property type="term" value="F:magnesium ion transmembrane transporter activity"/>
    <property type="evidence" value="ECO:0000250"/>
    <property type="project" value="UniProtKB"/>
</dbReference>
<dbReference type="GO" id="GO:0045016">
    <property type="term" value="P:mitochondrial magnesium ion transmembrane transport"/>
    <property type="evidence" value="ECO:0000250"/>
    <property type="project" value="UniProtKB"/>
</dbReference>
<dbReference type="CDD" id="cd12823">
    <property type="entry name" value="Mrs2_Mfm1p-like"/>
    <property type="match status" value="1"/>
</dbReference>
<dbReference type="FunFam" id="1.20.58.340:FF:000005">
    <property type="entry name" value="Inner membrane magnesium transporter MRS2"/>
    <property type="match status" value="1"/>
</dbReference>
<dbReference type="Gene3D" id="1.20.58.340">
    <property type="entry name" value="Magnesium transport protein CorA, transmembrane region"/>
    <property type="match status" value="1"/>
</dbReference>
<dbReference type="InterPro" id="IPR045863">
    <property type="entry name" value="CorA_TM1_TM2"/>
</dbReference>
<dbReference type="InterPro" id="IPR039204">
    <property type="entry name" value="MRS2-like"/>
</dbReference>
<dbReference type="PANTHER" id="PTHR13890:SF27">
    <property type="entry name" value="MAGNESIUM TRANSPORTER MRS2, MITOCHONDRIAL"/>
    <property type="match status" value="1"/>
</dbReference>
<dbReference type="PANTHER" id="PTHR13890">
    <property type="entry name" value="RNA SPLICING PROTEIN MRS2, MITOCHONDRIAL"/>
    <property type="match status" value="1"/>
</dbReference>
<dbReference type="Pfam" id="PF22099">
    <property type="entry name" value="MRS2-like"/>
    <property type="match status" value="1"/>
</dbReference>
<dbReference type="SUPFAM" id="SSF144083">
    <property type="entry name" value="Magnesium transport protein CorA, transmembrane region"/>
    <property type="match status" value="1"/>
</dbReference>
<organism>
    <name type="scientific">Candida albicans (strain SC5314 / ATCC MYA-2876)</name>
    <name type="common">Yeast</name>
    <dbReference type="NCBI Taxonomy" id="237561"/>
    <lineage>
        <taxon>Eukaryota</taxon>
        <taxon>Fungi</taxon>
        <taxon>Dikarya</taxon>
        <taxon>Ascomycota</taxon>
        <taxon>Saccharomycotina</taxon>
        <taxon>Pichiomycetes</taxon>
        <taxon>Debaryomycetaceae</taxon>
        <taxon>Candida/Lodderomyces clade</taxon>
        <taxon>Candida</taxon>
    </lineage>
</organism>
<feature type="transit peptide" description="Mitochondrion" evidence="2">
    <location>
        <begin position="1"/>
        <end position="33"/>
    </location>
</feature>
<feature type="chain" id="PRO_0000043242" description="Mitochondrial inner membrane magnesium transporter MRS2">
    <location>
        <begin position="34"/>
        <end position="468"/>
    </location>
</feature>
<feature type="transmembrane region" description="Helical" evidence="2">
    <location>
        <begin position="327"/>
        <end position="347"/>
    </location>
</feature>
<feature type="transmembrane region" description="Helical" evidence="2">
    <location>
        <begin position="365"/>
        <end position="385"/>
    </location>
</feature>
<feature type="short sequence motif" description="YGMN">
    <location>
        <begin position="351"/>
        <end position="354"/>
    </location>
</feature>
<evidence type="ECO:0000250" key="1">
    <source>
        <dbReference type="UniProtKB" id="Q01926"/>
    </source>
</evidence>
<evidence type="ECO:0000255" key="2"/>
<evidence type="ECO:0000305" key="3"/>
<keyword id="KW-0406">Ion transport</keyword>
<keyword id="KW-0460">Magnesium</keyword>
<keyword id="KW-0472">Membrane</keyword>
<keyword id="KW-0496">Mitochondrion</keyword>
<keyword id="KW-0999">Mitochondrion inner membrane</keyword>
<keyword id="KW-1185">Reference proteome</keyword>
<keyword id="KW-0809">Transit peptide</keyword>
<keyword id="KW-0812">Transmembrane</keyword>
<keyword id="KW-1133">Transmembrane helix</keyword>
<keyword id="KW-0813">Transport</keyword>
<gene>
    <name type="primary">MRS2</name>
    <name type="ordered locus">CAALFM_CR01960CA</name>
    <name type="ORF">CaO19.10128</name>
    <name type="ORF">CaO19.2597</name>
</gene>
<reference key="1">
    <citation type="journal article" date="2004" name="Proc. Natl. Acad. Sci. U.S.A.">
        <title>The diploid genome sequence of Candida albicans.</title>
        <authorList>
            <person name="Jones T."/>
            <person name="Federspiel N.A."/>
            <person name="Chibana H."/>
            <person name="Dungan J."/>
            <person name="Kalman S."/>
            <person name="Magee B.B."/>
            <person name="Newport G."/>
            <person name="Thorstenson Y.R."/>
            <person name="Agabian N."/>
            <person name="Magee P.T."/>
            <person name="Davis R.W."/>
            <person name="Scherer S."/>
        </authorList>
    </citation>
    <scope>NUCLEOTIDE SEQUENCE [LARGE SCALE GENOMIC DNA]</scope>
    <source>
        <strain>SC5314 / ATCC MYA-2876</strain>
    </source>
</reference>
<reference key="2">
    <citation type="journal article" date="2007" name="Genome Biol.">
        <title>Assembly of the Candida albicans genome into sixteen supercontigs aligned on the eight chromosomes.</title>
        <authorList>
            <person name="van het Hoog M."/>
            <person name="Rast T.J."/>
            <person name="Martchenko M."/>
            <person name="Grindle S."/>
            <person name="Dignard D."/>
            <person name="Hogues H."/>
            <person name="Cuomo C."/>
            <person name="Berriman M."/>
            <person name="Scherer S."/>
            <person name="Magee B.B."/>
            <person name="Whiteway M."/>
            <person name="Chibana H."/>
            <person name="Nantel A."/>
            <person name="Magee P.T."/>
        </authorList>
    </citation>
    <scope>GENOME REANNOTATION</scope>
    <source>
        <strain>SC5314 / ATCC MYA-2876</strain>
    </source>
</reference>
<reference key="3">
    <citation type="journal article" date="2013" name="Genome Biol.">
        <title>Assembly of a phased diploid Candida albicans genome facilitates allele-specific measurements and provides a simple model for repeat and indel structure.</title>
        <authorList>
            <person name="Muzzey D."/>
            <person name="Schwartz K."/>
            <person name="Weissman J.S."/>
            <person name="Sherlock G."/>
        </authorList>
    </citation>
    <scope>NUCLEOTIDE SEQUENCE [LARGE SCALE GENOMIC DNA]</scope>
    <scope>GENOME REANNOTATION</scope>
    <source>
        <strain>SC5314 / ATCC MYA-2876</strain>
    </source>
</reference>
<proteinExistence type="inferred from homology"/>
<accession>Q5A970</accession>
<accession>A0A1D8PS35</accession>
<name>MRS2_CANAL</name>